<sequence>MAEPQKSSKVAIKKMEDDLPPPPIPDSIQVIAPASQDPNPLPVPPPKQAFSKFYQQRQVNELKRLYRHMHPELRKNLEEAVTEDLAEMLNTEDPNAQGSVNLDKVLPGEVQSMRWIFENWALDSIGDHQATKKMMEDEIIPGGDVKSTSLRFENQSVNGDYLSTTAKVSETDLARGDVHTARWLFETQPLDSLNKLYSDETEMQEAVLKEPVQGGDVKGAKELFEAQSLDAIGRCCSVEEKSILQLKSEIQELKGDVKKTIRLFQTEPLCAIRDKTGNIHEIKSVCREEIQSNAVRTARWLFETQPLDTINKDTSKVQIIRGISLEEIGRPDVSGARWIFETQPLDAIREITVEEQDFKASTDFVTGADVTKQRLLFGTQALDSLKGEASESVAAKEQVIGGDVKSTLWLFETQPMETLKDNVEVGHLKKVELSAEEKGDVKQRKHVFETCPLGSISKAFEEEISAASTEEVVKGDVKSFKTLFETLPLDSIKEVDAEPITKEEEKIPPGNVKANQILFETTPLYAIKDSFGNFHEVTSVSREQVISGDVKKYKWMFETRPLDQFDESTKKVDIIRGITKQEVVAGDVRTAKWLFETQPMDVIHHQATQGEEHPSMKREISQRGDVKTCRWLFETQPMHTLYEKAEKKQEEDVSVPQADVKSYTWMFETQPLDSLKGQEEQYLRVSKAYSQDELQGVDVKTVRHLFETEPLGSSVVSEADQKKTLRYSSRVEIQSGEVSRVKEFFEAKPLDTTTKPTAVIKDDGTIEAGSVHKFTWLFENYPMDTLKDSSEGIQEIPPEKDIKGGDVGGKRFIFETYSLDQIHDKVDETELHKIQKDTMSKANVKSCTMLFESQPLYAIQDKEGGYHEVTSVQKEEIMKGDVKGARWLFETKPLDQIKKEEEVFVIRAVTQEDIKKGDVQAARWRFETEPLDSFPGGKISVPRTVDDVQKGDVQSNKQLFESQQVGQKKYVRMVSVSDVQRGDVRTSTWLFENQPVDSLYGDADRSSSISTVQREDSQKGDVKRCTWLFETQPMDTLKDPEVTVSTGTQEPIPRADVKSTTWLFESTPLDKFSASECSRETELKERTMRETLETLCTCQAIQHDGILIEANDTESVKMVKYQLSSPGAPEILKEEIVRGHLQGIMLQLLHRTNVEPQSVLVEEDREGKIKVSSLQLLDQSEAIKGKEDLSGNVAKALQSLLSQDASIKKGMVIQETKSESVKMTLYSLLFHSVQQKVVKGDVKSTIGNLMASSQEQRATVTVKREDNEKGNVQLFASCIEKGDLDYLKNLQQESEIQSLISAQAEQGAAESAPRALQSTNTHVLANKEQVEKVMAEAKSGALEGAKMVFACESTGKEGALEREVVHAVGVTGTTVQCLGKPQNLPTGMEKEEIMSGGLKVTTKSIQRVADVSKNTEKEESISACLKEPKATMQGIAQAKVTAERNEVVGEQQSLVTEQASQKQSEEKVLGNDLQAAMQSLRLATAEARNIQHHVQSKLQRNREEVHMACRQQVASKQETKTLQSTIHQQESASTMRENTSTAIRTSTTRVQEASRTHTSVSQKSIASHKKVSASEEVQGGQLLSQENQVVPSRDVSIKDGLYTATPVKTYINPFVESDYKEQSVQEERDVIIRGDVQTAIRALQSAATEQRLVEKEDIVRGNLKATLQSLEKSNVNVSKGDFKAAMIYRNAGQSYSVCKKKSETQVNNNQTAVVASGSQADNDFPPPPPVAVMKAEHCPPSTKATREGAPPLLTSKDEAPGCFSPLQTPLPPPPSLSCKPSDQNSTEKPKIPPKPEITAPLRKKPVPPPKPEHLLHEAYSASTNNSTNRSTKSVPPPVPPKPPGLREISMPKPPPAELQLSCTEVCEQSDHRESQDKCCTLESSMDKSITVHGPERKLPKYTAKTPLQMAEERYKARKGGQGKFELDRAKPSKPVKNGEVG</sequence>
<protein>
    <recommendedName>
        <fullName>Xin actin-binding repeat-containing protein 1</fullName>
    </recommendedName>
</protein>
<evidence type="ECO:0000250" key="1">
    <source>
        <dbReference type="UniProtKB" id="O70373"/>
    </source>
</evidence>
<evidence type="ECO:0000250" key="2">
    <source>
        <dbReference type="UniProtKB" id="Q5PZ43"/>
    </source>
</evidence>
<evidence type="ECO:0000250" key="3">
    <source>
        <dbReference type="UniProtKB" id="Q702N8"/>
    </source>
</evidence>
<evidence type="ECO:0000255" key="4">
    <source>
        <dbReference type="PROSITE-ProRule" id="PRU00721"/>
    </source>
</evidence>
<evidence type="ECO:0000256" key="5">
    <source>
        <dbReference type="SAM" id="MobiDB-lite"/>
    </source>
</evidence>
<evidence type="ECO:0000269" key="6">
    <source>
    </source>
</evidence>
<evidence type="ECO:0000269" key="7">
    <source>
    </source>
</evidence>
<evidence type="ECO:0000303" key="8">
    <source>
    </source>
</evidence>
<evidence type="ECO:0000303" key="9">
    <source ref="2"/>
</evidence>
<proteinExistence type="evidence at protein level"/>
<name>XIRP1_CHICK</name>
<gene>
    <name evidence="3" type="primary">Xirp1</name>
    <name evidence="8 9" type="synonym">Xin</name>
</gene>
<keyword id="KW-0009">Actin-binding</keyword>
<keyword id="KW-0965">Cell junction</keyword>
<keyword id="KW-0217">Developmental protein</keyword>
<keyword id="KW-1185">Reference proteome</keyword>
<keyword id="KW-0677">Repeat</keyword>
<organism>
    <name type="scientific">Gallus gallus</name>
    <name type="common">Chicken</name>
    <dbReference type="NCBI Taxonomy" id="9031"/>
    <lineage>
        <taxon>Eukaryota</taxon>
        <taxon>Metazoa</taxon>
        <taxon>Chordata</taxon>
        <taxon>Craniata</taxon>
        <taxon>Vertebrata</taxon>
        <taxon>Euteleostomi</taxon>
        <taxon>Archelosauria</taxon>
        <taxon>Archosauria</taxon>
        <taxon>Dinosauria</taxon>
        <taxon>Saurischia</taxon>
        <taxon>Theropoda</taxon>
        <taxon>Coelurosauria</taxon>
        <taxon>Aves</taxon>
        <taxon>Neognathae</taxon>
        <taxon>Galloanserae</taxon>
        <taxon>Galliformes</taxon>
        <taxon>Phasianidae</taxon>
        <taxon>Phasianinae</taxon>
        <taxon>Gallus</taxon>
    </lineage>
</organism>
<comment type="function">
    <text evidence="1 3 6">Involved in cardiac morphogenesis, including heart midline formation, cardiac tubule looping, myocardial formation and maintenance of heart beat speed and rhythm (PubMed:10021346). May protect actin filaments from depolymerization (By similarity). May play a role in development of normal skeletal muscle morphology, muscle fiber type composition and regulation of muscle satellite cell activation and survival (By similarity).</text>
</comment>
<comment type="subcellular location">
    <subcellularLocation>
        <location evidence="2">Cell junction</location>
        <location evidence="2">Adherens junction</location>
    </subcellularLocation>
    <subcellularLocation>
        <location evidence="2">Cell junction</location>
        <location evidence="2">Desmosome</location>
    </subcellularLocation>
    <text evidence="3">Colocalizes with actin stress fibers.</text>
</comment>
<comment type="tissue specificity">
    <text evidence="7">Expressed at intercalated disks in the heart (at protein level).</text>
</comment>
<comment type="developmental stage">
    <text evidence="6">First expressed at stage 8 in the paired lateral plate mesoderm that forms the primordia of the heart. At stages 10 and 11, expressed in the lateral regions of the developing heart tube. At stage 13, strongly expressed in the right side of the looping heart. At stage 15, expressed in rostral somites. At stage 20, expressed in heart, skeletal muscle and tongue.</text>
</comment>
<comment type="domain">
    <text>Xin repeats bind F-actin.</text>
</comment>
<comment type="similarity">
    <text evidence="4">Belongs to the Xin family.</text>
</comment>
<dbReference type="EMBL" id="AF051944">
    <property type="protein sequence ID" value="AAC06022.2"/>
    <property type="molecule type" value="mRNA"/>
</dbReference>
<dbReference type="PIR" id="T14266">
    <property type="entry name" value="T14266"/>
</dbReference>
<dbReference type="FunCoup" id="Q91957">
    <property type="interactions" value="2"/>
</dbReference>
<dbReference type="STRING" id="9031.ENSGALP00000038126"/>
<dbReference type="PaxDb" id="9031-ENSGALP00000009684"/>
<dbReference type="VEuPathDB" id="HostDB:geneid_374266"/>
<dbReference type="eggNOG" id="ENOG502QTAC">
    <property type="taxonomic scope" value="Eukaryota"/>
</dbReference>
<dbReference type="InParanoid" id="Q91957"/>
<dbReference type="PhylomeDB" id="Q91957"/>
<dbReference type="Proteomes" id="UP000000539">
    <property type="component" value="Unassembled WGS sequence"/>
</dbReference>
<dbReference type="GO" id="GO:0005912">
    <property type="term" value="C:adherens junction"/>
    <property type="evidence" value="ECO:0007669"/>
    <property type="project" value="UniProtKB-SubCell"/>
</dbReference>
<dbReference type="GO" id="GO:0030057">
    <property type="term" value="C:desmosome"/>
    <property type="evidence" value="ECO:0007669"/>
    <property type="project" value="UniProtKB-SubCell"/>
</dbReference>
<dbReference type="GO" id="GO:0014704">
    <property type="term" value="C:intercalated disc"/>
    <property type="evidence" value="ECO:0000314"/>
    <property type="project" value="UniProtKB"/>
</dbReference>
<dbReference type="GO" id="GO:0051015">
    <property type="term" value="F:actin filament binding"/>
    <property type="evidence" value="ECO:0000318"/>
    <property type="project" value="GO_Central"/>
</dbReference>
<dbReference type="GO" id="GO:0007015">
    <property type="term" value="P:actin filament organization"/>
    <property type="evidence" value="ECO:0000318"/>
    <property type="project" value="GO_Central"/>
</dbReference>
<dbReference type="InterPro" id="IPR012510">
    <property type="entry name" value="Actin-binding_Xin_repeat"/>
</dbReference>
<dbReference type="InterPro" id="IPR030072">
    <property type="entry name" value="XIRP1/XIRP2"/>
</dbReference>
<dbReference type="PANTHER" id="PTHR22591">
    <property type="entry name" value="XIN"/>
    <property type="match status" value="1"/>
</dbReference>
<dbReference type="PANTHER" id="PTHR22591:SF2">
    <property type="entry name" value="XIN ACTIN-BINDING REPEAT-CONTAINING PROTEIN 1"/>
    <property type="match status" value="1"/>
</dbReference>
<dbReference type="Pfam" id="PF08043">
    <property type="entry name" value="Xin"/>
    <property type="match status" value="14"/>
</dbReference>
<dbReference type="PROSITE" id="PS51389">
    <property type="entry name" value="XIN"/>
    <property type="match status" value="27"/>
</dbReference>
<feature type="chain" id="PRO_0000316985" description="Xin actin-binding repeat-containing protein 1">
    <location>
        <begin position="1"/>
        <end position="1941"/>
    </location>
</feature>
<feature type="repeat" description="Xin 1">
    <location>
        <begin position="108"/>
        <end position="123"/>
    </location>
</feature>
<feature type="repeat" description="Xin 2">
    <location>
        <begin position="143"/>
        <end position="158"/>
    </location>
</feature>
<feature type="repeat" description="Xin 3">
    <location>
        <begin position="176"/>
        <end position="191"/>
    </location>
</feature>
<feature type="repeat" description="Xin 4">
    <location>
        <begin position="215"/>
        <end position="230"/>
    </location>
</feature>
<feature type="repeat" description="Xin 5">
    <location>
        <begin position="255"/>
        <end position="270"/>
    </location>
</feature>
<feature type="repeat" description="Xin 6">
    <location>
        <begin position="293"/>
        <end position="308"/>
    </location>
</feature>
<feature type="repeat" description="Xin 7">
    <location>
        <begin position="331"/>
        <end position="346"/>
    </location>
</feature>
<feature type="repeat" description="Xin 8">
    <location>
        <begin position="368"/>
        <end position="383"/>
    </location>
</feature>
<feature type="repeat" description="Xin 9">
    <location>
        <begin position="402"/>
        <end position="417"/>
    </location>
</feature>
<feature type="repeat" description="Xin 10">
    <location>
        <begin position="439"/>
        <end position="454"/>
    </location>
</feature>
<feature type="repeat" description="Xin 11">
    <location>
        <begin position="475"/>
        <end position="490"/>
    </location>
</feature>
<feature type="repeat" description="Xin 12">
    <location>
        <begin position="510"/>
        <end position="525"/>
    </location>
</feature>
<feature type="repeat" description="Xin 13">
    <location>
        <begin position="548"/>
        <end position="563"/>
    </location>
</feature>
<feature type="repeat" description="Xin 14">
    <location>
        <begin position="586"/>
        <end position="601"/>
    </location>
</feature>
<feature type="repeat" description="Xin 15">
    <location>
        <begin position="624"/>
        <end position="639"/>
    </location>
</feature>
<feature type="repeat" description="Xin 16">
    <location>
        <begin position="658"/>
        <end position="673"/>
    </location>
</feature>
<feature type="repeat" description="Xin 17">
    <location>
        <begin position="697"/>
        <end position="712"/>
    </location>
</feature>
<feature type="repeat" description="Xin 18">
    <location>
        <begin position="736"/>
        <end position="751"/>
    </location>
</feature>
<feature type="repeat" description="Xin 19">
    <location>
        <begin position="769"/>
        <end position="784"/>
    </location>
</feature>
<feature type="repeat" description="Xin 20">
    <location>
        <begin position="805"/>
        <end position="820"/>
    </location>
</feature>
<feature type="repeat" description="Xin 21">
    <location>
        <begin position="842"/>
        <end position="857"/>
    </location>
</feature>
<feature type="repeat" description="Xin 22">
    <location>
        <begin position="880"/>
        <end position="895"/>
    </location>
</feature>
<feature type="repeat" description="Xin 23">
    <location>
        <begin position="917"/>
        <end position="932"/>
    </location>
</feature>
<feature type="repeat" description="Xin 24">
    <location>
        <begin position="951"/>
        <end position="966"/>
    </location>
</feature>
<feature type="repeat" description="Xin 25">
    <location>
        <begin position="982"/>
        <end position="997"/>
    </location>
</feature>
<feature type="repeat" description="Xin 26">
    <location>
        <begin position="1020"/>
        <end position="1035"/>
    </location>
</feature>
<feature type="repeat" description="Xin 27">
    <location>
        <begin position="1055"/>
        <end position="1070"/>
    </location>
</feature>
<feature type="region of interest" description="Disordered" evidence="5">
    <location>
        <begin position="1"/>
        <end position="41"/>
    </location>
</feature>
<feature type="region of interest" description="Disordered" evidence="5">
    <location>
        <begin position="1514"/>
        <end position="1568"/>
    </location>
</feature>
<feature type="region of interest" description="Disordered" evidence="5">
    <location>
        <begin position="1715"/>
        <end position="1856"/>
    </location>
</feature>
<feature type="region of interest" description="Disordered" evidence="5">
    <location>
        <begin position="1914"/>
        <end position="1941"/>
    </location>
</feature>
<feature type="compositionally biased region" description="Polar residues" evidence="5">
    <location>
        <begin position="1514"/>
        <end position="1565"/>
    </location>
</feature>
<feature type="compositionally biased region" description="Low complexity" evidence="5">
    <location>
        <begin position="1820"/>
        <end position="1833"/>
    </location>
</feature>
<feature type="compositionally biased region" description="Pro residues" evidence="5">
    <location>
        <begin position="1834"/>
        <end position="1843"/>
    </location>
</feature>
<accession>Q91957</accession>
<reference key="1">
    <citation type="journal article" date="1999" name="Development">
        <title>Requirement of a novel gene, Xin, in cardiac morphogenesis.</title>
        <authorList>
            <person name="Wang D.-Z."/>
            <person name="Reiter R.S."/>
            <person name="Lin J.L.-C."/>
            <person name="Wang Q."/>
            <person name="Williams H.S."/>
            <person name="Krob S.L."/>
            <person name="Schultheiss T.M."/>
            <person name="Evans S."/>
            <person name="Lin J.-J."/>
        </authorList>
    </citation>
    <scope>NUCLEOTIDE SEQUENCE [MRNA]</scope>
    <scope>FUNCTION</scope>
    <scope>DEVELOPMENTAL STAGE</scope>
    <source>
        <tissue>Embryonic heart</tissue>
    </source>
</reference>
<reference key="2">
    <citation type="submission" date="2005-03" db="EMBL/GenBank/DDBJ databases">
        <authorList>
            <person name="Wang D.-Z."/>
            <person name="Lin J.J.-C."/>
        </authorList>
    </citation>
    <scope>SEQUENCE REVISION</scope>
</reference>
<reference key="3">
    <citation type="journal article" date="2008" name="PLoS ONE">
        <title>Emergence of Xin demarcates a key innovation in heart evolution.</title>
        <authorList>
            <person name="Grosskurth S.E."/>
            <person name="Bhattacharya D."/>
            <person name="Wang Q."/>
            <person name="Lin J.J."/>
        </authorList>
    </citation>
    <scope>TISSUE SPECIFICITY</scope>
</reference>